<reference key="1">
    <citation type="journal article" date="1992" name="J. Biol. Chem.">
        <title>Cytochrome P-450terp. Isolation and purification of the protein and cloning and sequencing of its operon.</title>
        <authorList>
            <person name="Peterson J.A."/>
            <person name="Lu J.-Y."/>
            <person name="Geisselsoder J."/>
            <person name="Graham-Lorence S."/>
            <person name="Carmona C."/>
            <person name="Witney F."/>
            <person name="Lorence M.C."/>
        </authorList>
    </citation>
    <scope>NUCLEOTIDE SEQUENCE [GENOMIC DNA]</scope>
    <scope>PROTEIN SEQUENCE OF 2-24</scope>
</reference>
<reference key="2">
    <citation type="journal article" date="1999" name="Biochemistry">
        <title>A model for the solution structure of oxidized terpredoxin, a Fe2S2 ferredoxin from Pseudomonas.</title>
        <authorList>
            <person name="Mo H."/>
            <person name="Pochapsky S.S."/>
            <person name="Pochapsky T.C."/>
        </authorList>
    </citation>
    <scope>STRUCTURE BY NMR</scope>
</reference>
<organism>
    <name type="scientific">Pseudomonas sp</name>
    <dbReference type="NCBI Taxonomy" id="306"/>
    <lineage>
        <taxon>Bacteria</taxon>
        <taxon>Pseudomonadati</taxon>
        <taxon>Pseudomonadota</taxon>
        <taxon>Gammaproteobacteria</taxon>
        <taxon>Pseudomonadales</taxon>
        <taxon>Pseudomonadaceae</taxon>
        <taxon>Pseudomonas</taxon>
    </lineage>
</organism>
<feature type="initiator methionine" description="Removed" evidence="2">
    <location>
        <position position="1"/>
    </location>
</feature>
<feature type="chain" id="PRO_0000201164" description="Terpredoxin">
    <location>
        <begin position="2"/>
        <end position="106"/>
    </location>
</feature>
<feature type="domain" description="2Fe-2S ferredoxin-type" evidence="1">
    <location>
        <begin position="2"/>
        <end position="106"/>
    </location>
</feature>
<feature type="binding site">
    <location>
        <position position="40"/>
    </location>
    <ligand>
        <name>[2Fe-2S] cluster</name>
        <dbReference type="ChEBI" id="CHEBI:190135"/>
    </ligand>
</feature>
<feature type="binding site">
    <location>
        <position position="46"/>
    </location>
    <ligand>
        <name>[2Fe-2S] cluster</name>
        <dbReference type="ChEBI" id="CHEBI:190135"/>
    </ligand>
</feature>
<feature type="binding site">
    <location>
        <position position="49"/>
    </location>
    <ligand>
        <name>[2Fe-2S] cluster</name>
        <dbReference type="ChEBI" id="CHEBI:190135"/>
    </ligand>
</feature>
<feature type="binding site">
    <location>
        <position position="87"/>
    </location>
    <ligand>
        <name>[2Fe-2S] cluster</name>
        <dbReference type="ChEBI" id="CHEBI:190135"/>
    </ligand>
</feature>
<feature type="strand" evidence="4">
    <location>
        <begin position="3"/>
        <end position="6"/>
    </location>
</feature>
<feature type="turn" evidence="4">
    <location>
        <begin position="9"/>
        <end position="11"/>
    </location>
</feature>
<feature type="strand" evidence="4">
    <location>
        <begin position="14"/>
        <end position="17"/>
    </location>
</feature>
<feature type="helix" evidence="4">
    <location>
        <begin position="26"/>
        <end position="30"/>
    </location>
</feature>
<feature type="turn" evidence="4">
    <location>
        <begin position="55"/>
        <end position="57"/>
    </location>
</feature>
<feature type="helix" evidence="4">
    <location>
        <begin position="58"/>
        <end position="61"/>
    </location>
</feature>
<feature type="helix" evidence="4">
    <location>
        <begin position="68"/>
        <end position="73"/>
    </location>
</feature>
<feature type="helix" evidence="4">
    <location>
        <begin position="86"/>
        <end position="88"/>
    </location>
</feature>
<feature type="strand" evidence="4">
    <location>
        <begin position="98"/>
        <end position="101"/>
    </location>
</feature>
<comment type="function">
    <text>The oxidation of alpha-terpineol by cytochrome p450-TERP requires the participation of a flavoprotein, terpredoxin reductase, and an iron-sulfur protein, terpredoxin, to mediate the transfer of electrons from NADH to P450 for oxygen activation.</text>
</comment>
<comment type="cofactor">
    <cofactor>
        <name>[2Fe-2S] cluster</name>
        <dbReference type="ChEBI" id="CHEBI:190135"/>
    </cofactor>
    <text>Binds 1 [2Fe-2S] cluster.</text>
</comment>
<comment type="similarity">
    <text evidence="3">Belongs to the adrenodoxin/putidaredoxin family.</text>
</comment>
<name>TERPB_PSESP</name>
<gene>
    <name type="primary">terPB</name>
</gene>
<sequence length="106" mass="11229">MPRVVFIDEQSGEYAVDAQDGQSLMEVATQNGVPGIVAECGGSCVCATCRIEIEDAWVEIVGEANPDENDLLQSTGEPMTAGTRLSCQVFIDPSMDGLIVRVPLPA</sequence>
<dbReference type="EMBL" id="M91440">
    <property type="protein sequence ID" value="AAA25998.1"/>
    <property type="molecule type" value="Genomic_DNA"/>
</dbReference>
<dbReference type="PIR" id="E42971">
    <property type="entry name" value="E42971"/>
</dbReference>
<dbReference type="PDB" id="1B9R">
    <property type="method" value="NMR"/>
    <property type="chains" value="A=2-106"/>
</dbReference>
<dbReference type="PDBsum" id="1B9R"/>
<dbReference type="SMR" id="P33007"/>
<dbReference type="EvolutionaryTrace" id="P33007"/>
<dbReference type="GO" id="GO:0005829">
    <property type="term" value="C:cytosol"/>
    <property type="evidence" value="ECO:0007669"/>
    <property type="project" value="TreeGrafter"/>
</dbReference>
<dbReference type="GO" id="GO:0051537">
    <property type="term" value="F:2 iron, 2 sulfur cluster binding"/>
    <property type="evidence" value="ECO:0007669"/>
    <property type="project" value="UniProtKB-KW"/>
</dbReference>
<dbReference type="GO" id="GO:0009055">
    <property type="term" value="F:electron transfer activity"/>
    <property type="evidence" value="ECO:0007669"/>
    <property type="project" value="TreeGrafter"/>
</dbReference>
<dbReference type="GO" id="GO:0046872">
    <property type="term" value="F:metal ion binding"/>
    <property type="evidence" value="ECO:0007669"/>
    <property type="project" value="UniProtKB-KW"/>
</dbReference>
<dbReference type="GO" id="GO:0140647">
    <property type="term" value="P:P450-containing electron transport chain"/>
    <property type="evidence" value="ECO:0007669"/>
    <property type="project" value="InterPro"/>
</dbReference>
<dbReference type="CDD" id="cd00207">
    <property type="entry name" value="fer2"/>
    <property type="match status" value="1"/>
</dbReference>
<dbReference type="Gene3D" id="3.10.20.30">
    <property type="match status" value="1"/>
</dbReference>
<dbReference type="InterPro" id="IPR036010">
    <property type="entry name" value="2Fe-2S_ferredoxin-like_sf"/>
</dbReference>
<dbReference type="InterPro" id="IPR001041">
    <property type="entry name" value="2Fe-2S_ferredoxin-type"/>
</dbReference>
<dbReference type="InterPro" id="IPR001055">
    <property type="entry name" value="Adrenodoxin-like"/>
</dbReference>
<dbReference type="InterPro" id="IPR018298">
    <property type="entry name" value="Adrenodoxin_Fe-S_BS"/>
</dbReference>
<dbReference type="InterPro" id="IPR012675">
    <property type="entry name" value="Beta-grasp_dom_sf"/>
</dbReference>
<dbReference type="PANTHER" id="PTHR23426:SF65">
    <property type="entry name" value="FERREDOXIN-2, MITOCHONDRIAL"/>
    <property type="match status" value="1"/>
</dbReference>
<dbReference type="PANTHER" id="PTHR23426">
    <property type="entry name" value="FERREDOXIN/ADRENODOXIN"/>
    <property type="match status" value="1"/>
</dbReference>
<dbReference type="Pfam" id="PF00111">
    <property type="entry name" value="Fer2"/>
    <property type="match status" value="1"/>
</dbReference>
<dbReference type="PRINTS" id="PR00355">
    <property type="entry name" value="ADRENODOXIN"/>
</dbReference>
<dbReference type="SUPFAM" id="SSF54292">
    <property type="entry name" value="2Fe-2S ferredoxin-like"/>
    <property type="match status" value="1"/>
</dbReference>
<dbReference type="PROSITE" id="PS51085">
    <property type="entry name" value="2FE2S_FER_2"/>
    <property type="match status" value="1"/>
</dbReference>
<dbReference type="PROSITE" id="PS00814">
    <property type="entry name" value="ADX"/>
    <property type="match status" value="1"/>
</dbReference>
<evidence type="ECO:0000255" key="1">
    <source>
        <dbReference type="PROSITE-ProRule" id="PRU00465"/>
    </source>
</evidence>
<evidence type="ECO:0000269" key="2">
    <source>
    </source>
</evidence>
<evidence type="ECO:0000305" key="3"/>
<evidence type="ECO:0007829" key="4">
    <source>
        <dbReference type="PDB" id="1B9R"/>
    </source>
</evidence>
<keyword id="KW-0001">2Fe-2S</keyword>
<keyword id="KW-0002">3D-structure</keyword>
<keyword id="KW-0903">Direct protein sequencing</keyword>
<keyword id="KW-0249">Electron transport</keyword>
<keyword id="KW-0408">Iron</keyword>
<keyword id="KW-0411">Iron-sulfur</keyword>
<keyword id="KW-0479">Metal-binding</keyword>
<keyword id="KW-0813">Transport</keyword>
<accession>P33007</accession>
<proteinExistence type="evidence at protein level"/>
<protein>
    <recommendedName>
        <fullName>Terpredoxin</fullName>
        <shortName>TDX</shortName>
    </recommendedName>
</protein>